<organism>
    <name type="scientific">Streptococcus pyogenes serotype M3 (strain SSI-1)</name>
    <dbReference type="NCBI Taxonomy" id="193567"/>
    <lineage>
        <taxon>Bacteria</taxon>
        <taxon>Bacillati</taxon>
        <taxon>Bacillota</taxon>
        <taxon>Bacilli</taxon>
        <taxon>Lactobacillales</taxon>
        <taxon>Streptococcaceae</taxon>
        <taxon>Streptococcus</taxon>
    </lineage>
</organism>
<proteinExistence type="inferred from homology"/>
<keyword id="KW-0963">Cytoplasm</keyword>
<keyword id="KW-0690">Ribosome biogenesis</keyword>
<evidence type="ECO:0000255" key="1">
    <source>
        <dbReference type="HAMAP-Rule" id="MF_01077"/>
    </source>
</evidence>
<evidence type="ECO:0000305" key="2"/>
<protein>
    <recommendedName>
        <fullName evidence="1">Ribosome maturation factor RimP</fullName>
    </recommendedName>
</protein>
<sequence>MDSQGPIILEKSIKIEEVIKIANTSIIDIVTKTVTPEIKAPYELVDVEYDKMGSDYILSILVDKEDGITVEDTSDLTNIISPLLDTIDPDPFPNQYMLEVSSPGLERPLKTADSLKAAVGSYINVSLYQAIDKVKVFQGDLLAFDGETLTIDYLDKTRHKIVNIPYQAVAKVRMAVKL</sequence>
<gene>
    <name evidence="1" type="primary">rimP</name>
    <name type="ordered locus">SPs0368</name>
</gene>
<reference key="1">
    <citation type="journal article" date="2003" name="Genome Res.">
        <title>Genome sequence of an M3 strain of Streptococcus pyogenes reveals a large-scale genomic rearrangement in invasive strains and new insights into phage evolution.</title>
        <authorList>
            <person name="Nakagawa I."/>
            <person name="Kurokawa K."/>
            <person name="Yamashita A."/>
            <person name="Nakata M."/>
            <person name="Tomiyasu Y."/>
            <person name="Okahashi N."/>
            <person name="Kawabata S."/>
            <person name="Yamazaki K."/>
            <person name="Shiba T."/>
            <person name="Yasunaga T."/>
            <person name="Hayashi H."/>
            <person name="Hattori M."/>
            <person name="Hamada S."/>
        </authorList>
    </citation>
    <scope>NUCLEOTIDE SEQUENCE [LARGE SCALE GENOMIC DNA]</scope>
    <source>
        <strain>SSI-1</strain>
    </source>
</reference>
<comment type="function">
    <text evidence="1">Required for maturation of 30S ribosomal subunits.</text>
</comment>
<comment type="subcellular location">
    <subcellularLocation>
        <location evidence="1">Cytoplasm</location>
    </subcellularLocation>
</comment>
<comment type="similarity">
    <text evidence="1">Belongs to the RimP family.</text>
</comment>
<comment type="sequence caution" evidence="2">
    <conflict type="erroneous initiation">
        <sequence resource="EMBL-CDS" id="BAC63463"/>
    </conflict>
</comment>
<accession>P0DF07</accession>
<accession>Q879I9</accession>
<accession>Q8K642</accession>
<dbReference type="EMBL" id="BA000034">
    <property type="protein sequence ID" value="BAC63463.1"/>
    <property type="status" value="ALT_INIT"/>
    <property type="molecule type" value="Genomic_DNA"/>
</dbReference>
<dbReference type="RefSeq" id="WP_011054929.1">
    <property type="nucleotide sequence ID" value="NC_004606.1"/>
</dbReference>
<dbReference type="SMR" id="P0DF07"/>
<dbReference type="KEGG" id="sps:SPs0368"/>
<dbReference type="HOGENOM" id="CLU_070525_2_0_9"/>
<dbReference type="GO" id="GO:0005829">
    <property type="term" value="C:cytosol"/>
    <property type="evidence" value="ECO:0007669"/>
    <property type="project" value="TreeGrafter"/>
</dbReference>
<dbReference type="GO" id="GO:0000028">
    <property type="term" value="P:ribosomal small subunit assembly"/>
    <property type="evidence" value="ECO:0007669"/>
    <property type="project" value="TreeGrafter"/>
</dbReference>
<dbReference type="GO" id="GO:0006412">
    <property type="term" value="P:translation"/>
    <property type="evidence" value="ECO:0007669"/>
    <property type="project" value="TreeGrafter"/>
</dbReference>
<dbReference type="CDD" id="cd01734">
    <property type="entry name" value="YlxS_C"/>
    <property type="match status" value="1"/>
</dbReference>
<dbReference type="Gene3D" id="2.30.30.180">
    <property type="entry name" value="Ribosome maturation factor RimP, C-terminal domain"/>
    <property type="match status" value="1"/>
</dbReference>
<dbReference type="Gene3D" id="3.30.300.70">
    <property type="entry name" value="RimP-like superfamily, N-terminal"/>
    <property type="match status" value="1"/>
</dbReference>
<dbReference type="HAMAP" id="MF_01077">
    <property type="entry name" value="RimP"/>
    <property type="match status" value="1"/>
</dbReference>
<dbReference type="InterPro" id="IPR003728">
    <property type="entry name" value="Ribosome_maturation_RimP"/>
</dbReference>
<dbReference type="InterPro" id="IPR028998">
    <property type="entry name" value="RimP_C"/>
</dbReference>
<dbReference type="InterPro" id="IPR036847">
    <property type="entry name" value="RimP_C_sf"/>
</dbReference>
<dbReference type="InterPro" id="IPR028989">
    <property type="entry name" value="RimP_N"/>
</dbReference>
<dbReference type="InterPro" id="IPR035956">
    <property type="entry name" value="RimP_N_sf"/>
</dbReference>
<dbReference type="NCBIfam" id="NF000928">
    <property type="entry name" value="PRK00092.1-2"/>
    <property type="match status" value="1"/>
</dbReference>
<dbReference type="PANTHER" id="PTHR33867">
    <property type="entry name" value="RIBOSOME MATURATION FACTOR RIMP"/>
    <property type="match status" value="1"/>
</dbReference>
<dbReference type="PANTHER" id="PTHR33867:SF1">
    <property type="entry name" value="RIBOSOME MATURATION FACTOR RIMP"/>
    <property type="match status" value="1"/>
</dbReference>
<dbReference type="Pfam" id="PF17384">
    <property type="entry name" value="DUF150_C"/>
    <property type="match status" value="1"/>
</dbReference>
<dbReference type="Pfam" id="PF02576">
    <property type="entry name" value="RimP_N"/>
    <property type="match status" value="1"/>
</dbReference>
<dbReference type="SUPFAM" id="SSF74942">
    <property type="entry name" value="YhbC-like, C-terminal domain"/>
    <property type="match status" value="1"/>
</dbReference>
<dbReference type="SUPFAM" id="SSF75420">
    <property type="entry name" value="YhbC-like, N-terminal domain"/>
    <property type="match status" value="1"/>
</dbReference>
<feature type="chain" id="PRO_0000411543" description="Ribosome maturation factor RimP">
    <location>
        <begin position="1"/>
        <end position="178"/>
    </location>
</feature>
<name>RIMP_STRPQ</name>